<keyword id="KW-0694">RNA-binding</keyword>
<keyword id="KW-0804">Transcription</keyword>
<keyword id="KW-0889">Transcription antitermination</keyword>
<keyword id="KW-0805">Transcription regulation</keyword>
<protein>
    <recommendedName>
        <fullName evidence="1">Transcription antitermination protein NusB</fullName>
    </recommendedName>
    <alternativeName>
        <fullName evidence="1">Antitermination factor NusB</fullName>
    </alternativeName>
</protein>
<gene>
    <name evidence="1" type="primary">nusB</name>
    <name type="ordered locus">CPF_2078</name>
</gene>
<feature type="chain" id="PRO_0000265506" description="Transcription antitermination protein NusB">
    <location>
        <begin position="1"/>
        <end position="135"/>
    </location>
</feature>
<comment type="function">
    <text evidence="1">Involved in transcription antitermination. Required for transcription of ribosomal RNA (rRNA) genes. Binds specifically to the boxA antiterminator sequence of the ribosomal RNA (rrn) operons.</text>
</comment>
<comment type="similarity">
    <text evidence="1">Belongs to the NusB family.</text>
</comment>
<dbReference type="EMBL" id="CP000246">
    <property type="protein sequence ID" value="ABG84801.1"/>
    <property type="molecule type" value="Genomic_DNA"/>
</dbReference>
<dbReference type="RefSeq" id="WP_003451187.1">
    <property type="nucleotide sequence ID" value="NC_008261.1"/>
</dbReference>
<dbReference type="SMR" id="Q0TPD3"/>
<dbReference type="STRING" id="195103.CPF_2078"/>
<dbReference type="PaxDb" id="195103-CPF_2078"/>
<dbReference type="GeneID" id="93001641"/>
<dbReference type="KEGG" id="cpf:CPF_2078"/>
<dbReference type="eggNOG" id="COG0781">
    <property type="taxonomic scope" value="Bacteria"/>
</dbReference>
<dbReference type="HOGENOM" id="CLU_087843_3_1_9"/>
<dbReference type="Proteomes" id="UP000001823">
    <property type="component" value="Chromosome"/>
</dbReference>
<dbReference type="GO" id="GO:0005829">
    <property type="term" value="C:cytosol"/>
    <property type="evidence" value="ECO:0007669"/>
    <property type="project" value="TreeGrafter"/>
</dbReference>
<dbReference type="GO" id="GO:0003723">
    <property type="term" value="F:RNA binding"/>
    <property type="evidence" value="ECO:0007669"/>
    <property type="project" value="UniProtKB-UniRule"/>
</dbReference>
<dbReference type="GO" id="GO:0006353">
    <property type="term" value="P:DNA-templated transcription termination"/>
    <property type="evidence" value="ECO:0007669"/>
    <property type="project" value="UniProtKB-UniRule"/>
</dbReference>
<dbReference type="GO" id="GO:0031564">
    <property type="term" value="P:transcription antitermination"/>
    <property type="evidence" value="ECO:0007669"/>
    <property type="project" value="UniProtKB-KW"/>
</dbReference>
<dbReference type="Gene3D" id="1.10.940.10">
    <property type="entry name" value="NusB-like"/>
    <property type="match status" value="1"/>
</dbReference>
<dbReference type="HAMAP" id="MF_00073">
    <property type="entry name" value="NusB"/>
    <property type="match status" value="1"/>
</dbReference>
<dbReference type="InterPro" id="IPR035926">
    <property type="entry name" value="NusB-like_sf"/>
</dbReference>
<dbReference type="InterPro" id="IPR011605">
    <property type="entry name" value="NusB_fam"/>
</dbReference>
<dbReference type="InterPro" id="IPR006027">
    <property type="entry name" value="NusB_RsmB_TIM44"/>
</dbReference>
<dbReference type="NCBIfam" id="TIGR01951">
    <property type="entry name" value="nusB"/>
    <property type="match status" value="1"/>
</dbReference>
<dbReference type="PANTHER" id="PTHR11078:SF3">
    <property type="entry name" value="ANTITERMINATION NUSB DOMAIN-CONTAINING PROTEIN"/>
    <property type="match status" value="1"/>
</dbReference>
<dbReference type="PANTHER" id="PTHR11078">
    <property type="entry name" value="N UTILIZATION SUBSTANCE PROTEIN B-RELATED"/>
    <property type="match status" value="1"/>
</dbReference>
<dbReference type="Pfam" id="PF01029">
    <property type="entry name" value="NusB"/>
    <property type="match status" value="1"/>
</dbReference>
<dbReference type="SUPFAM" id="SSF48013">
    <property type="entry name" value="NusB-like"/>
    <property type="match status" value="1"/>
</dbReference>
<reference key="1">
    <citation type="journal article" date="2006" name="Genome Res.">
        <title>Skewed genomic variability in strains of the toxigenic bacterial pathogen, Clostridium perfringens.</title>
        <authorList>
            <person name="Myers G.S.A."/>
            <person name="Rasko D.A."/>
            <person name="Cheung J.K."/>
            <person name="Ravel J."/>
            <person name="Seshadri R."/>
            <person name="DeBoy R.T."/>
            <person name="Ren Q."/>
            <person name="Varga J."/>
            <person name="Awad M.M."/>
            <person name="Brinkac L.M."/>
            <person name="Daugherty S.C."/>
            <person name="Haft D.H."/>
            <person name="Dodson R.J."/>
            <person name="Madupu R."/>
            <person name="Nelson W.C."/>
            <person name="Rosovitz M.J."/>
            <person name="Sullivan S.A."/>
            <person name="Khouri H."/>
            <person name="Dimitrov G.I."/>
            <person name="Watkins K.L."/>
            <person name="Mulligan S."/>
            <person name="Benton J."/>
            <person name="Radune D."/>
            <person name="Fisher D.J."/>
            <person name="Atkins H.S."/>
            <person name="Hiscox T."/>
            <person name="Jost B.H."/>
            <person name="Billington S.J."/>
            <person name="Songer J.G."/>
            <person name="McClane B.A."/>
            <person name="Titball R.W."/>
            <person name="Rood J.I."/>
            <person name="Melville S.B."/>
            <person name="Paulsen I.T."/>
        </authorList>
    </citation>
    <scope>NUCLEOTIDE SEQUENCE [LARGE SCALE GENOMIC DNA]</scope>
    <source>
        <strain>ATCC 13124 / DSM 756 / JCM 1290 / NCIMB 6125 / NCTC 8237 / S 107 / Type A</strain>
    </source>
</reference>
<sequence>MNRVKSREYLLQLAYQMEITSETALETFNSFMENEDISKDDLDLAYIKSGLLGIEENKEKLDSLIESQLVKWKLNRISKVNLSILRISTYEILFAEDVPGKVSINEAIELCKKYSDNKSVSFINGVLDKVYKNMQ</sequence>
<proteinExistence type="inferred from homology"/>
<evidence type="ECO:0000255" key="1">
    <source>
        <dbReference type="HAMAP-Rule" id="MF_00073"/>
    </source>
</evidence>
<organism>
    <name type="scientific">Clostridium perfringens (strain ATCC 13124 / DSM 756 / JCM 1290 / NCIMB 6125 / NCTC 8237 / Type A)</name>
    <dbReference type="NCBI Taxonomy" id="195103"/>
    <lineage>
        <taxon>Bacteria</taxon>
        <taxon>Bacillati</taxon>
        <taxon>Bacillota</taxon>
        <taxon>Clostridia</taxon>
        <taxon>Eubacteriales</taxon>
        <taxon>Clostridiaceae</taxon>
        <taxon>Clostridium</taxon>
    </lineage>
</organism>
<accession>Q0TPD3</accession>
<name>NUSB_CLOP1</name>